<dbReference type="EMBL" id="CP000488">
    <property type="protein sequence ID" value="ABL02068.1"/>
    <property type="molecule type" value="Genomic_DNA"/>
</dbReference>
<dbReference type="RefSeq" id="WP_011737693.1">
    <property type="nucleotide sequence ID" value="NC_008610.1"/>
</dbReference>
<dbReference type="SMR" id="A1AVW1"/>
<dbReference type="STRING" id="413404.Rmag_0287"/>
<dbReference type="KEGG" id="rma:Rmag_0287"/>
<dbReference type="eggNOG" id="COG1826">
    <property type="taxonomic scope" value="Bacteria"/>
</dbReference>
<dbReference type="HOGENOM" id="CLU_086034_5_3_6"/>
<dbReference type="Proteomes" id="UP000002587">
    <property type="component" value="Chromosome"/>
</dbReference>
<dbReference type="GO" id="GO:0033281">
    <property type="term" value="C:TAT protein transport complex"/>
    <property type="evidence" value="ECO:0007669"/>
    <property type="project" value="UniProtKB-UniRule"/>
</dbReference>
<dbReference type="GO" id="GO:0008320">
    <property type="term" value="F:protein transmembrane transporter activity"/>
    <property type="evidence" value="ECO:0007669"/>
    <property type="project" value="UniProtKB-UniRule"/>
</dbReference>
<dbReference type="GO" id="GO:0043953">
    <property type="term" value="P:protein transport by the Tat complex"/>
    <property type="evidence" value="ECO:0007669"/>
    <property type="project" value="UniProtKB-UniRule"/>
</dbReference>
<dbReference type="Gene3D" id="1.20.5.3310">
    <property type="match status" value="1"/>
</dbReference>
<dbReference type="HAMAP" id="MF_00236">
    <property type="entry name" value="TatA_E"/>
    <property type="match status" value="1"/>
</dbReference>
<dbReference type="InterPro" id="IPR003369">
    <property type="entry name" value="TatA/B/E"/>
</dbReference>
<dbReference type="InterPro" id="IPR006312">
    <property type="entry name" value="TatA/E"/>
</dbReference>
<dbReference type="NCBIfam" id="TIGR01411">
    <property type="entry name" value="tatAE"/>
    <property type="match status" value="1"/>
</dbReference>
<dbReference type="PANTHER" id="PTHR42982">
    <property type="entry name" value="SEC-INDEPENDENT PROTEIN TRANSLOCASE PROTEIN TATA"/>
    <property type="match status" value="1"/>
</dbReference>
<dbReference type="PANTHER" id="PTHR42982:SF1">
    <property type="entry name" value="SEC-INDEPENDENT PROTEIN TRANSLOCASE PROTEIN TATA"/>
    <property type="match status" value="1"/>
</dbReference>
<dbReference type="Pfam" id="PF02416">
    <property type="entry name" value="TatA_B_E"/>
    <property type="match status" value="1"/>
</dbReference>
<reference key="1">
    <citation type="journal article" date="2007" name="Science">
        <title>The Calyptogena magnifica chemoautotrophic symbiont genome.</title>
        <authorList>
            <person name="Newton I.L.G."/>
            <person name="Woyke T."/>
            <person name="Auchtung T.A."/>
            <person name="Dilly G.F."/>
            <person name="Dutton R.J."/>
            <person name="Fisher M.C."/>
            <person name="Fontanez K.M."/>
            <person name="Lau E."/>
            <person name="Stewart F.J."/>
            <person name="Richardson P.M."/>
            <person name="Barry K.W."/>
            <person name="Saunders E."/>
            <person name="Detter J.C."/>
            <person name="Wu D."/>
            <person name="Eisen J.A."/>
            <person name="Cavanaugh C.M."/>
        </authorList>
    </citation>
    <scope>NUCLEOTIDE SEQUENCE [LARGE SCALE GENOMIC DNA]</scope>
</reference>
<sequence length="67" mass="7345">MMPGPFELIVILVIVLLLFGGKRLKNVGSDLGNAIKGFKKSMQKEPADQINTKDNIVEAKTTKESTK</sequence>
<evidence type="ECO:0000255" key="1">
    <source>
        <dbReference type="HAMAP-Rule" id="MF_00236"/>
    </source>
</evidence>
<gene>
    <name evidence="1" type="primary">tatA</name>
    <name type="ordered locus">Rmag_0287</name>
</gene>
<comment type="function">
    <text evidence="1">Part of the twin-arginine translocation (Tat) system that transports large folded proteins containing a characteristic twin-arginine motif in their signal peptide across membranes. TatA could form the protein-conducting channel of the Tat system.</text>
</comment>
<comment type="subunit">
    <text evidence="1">The Tat system comprises two distinct complexes: a TatABC complex, containing multiple copies of TatA, TatB and TatC subunits, and a separate TatA complex, containing only TatA subunits. Substrates initially bind to the TatABC complex, which probably triggers association of the separate TatA complex to form the active translocon.</text>
</comment>
<comment type="subcellular location">
    <subcellularLocation>
        <location evidence="1">Cell inner membrane</location>
        <topology evidence="1">Single-pass membrane protein</topology>
    </subcellularLocation>
</comment>
<comment type="similarity">
    <text evidence="1">Belongs to the TatA/E family.</text>
</comment>
<proteinExistence type="inferred from homology"/>
<accession>A1AVW1</accession>
<name>TATA_RUTMC</name>
<keyword id="KW-0997">Cell inner membrane</keyword>
<keyword id="KW-1003">Cell membrane</keyword>
<keyword id="KW-0472">Membrane</keyword>
<keyword id="KW-0653">Protein transport</keyword>
<keyword id="KW-0811">Translocation</keyword>
<keyword id="KW-0812">Transmembrane</keyword>
<keyword id="KW-1133">Transmembrane helix</keyword>
<keyword id="KW-0813">Transport</keyword>
<feature type="chain" id="PRO_0000336641" description="Sec-independent protein translocase protein TatA">
    <location>
        <begin position="1"/>
        <end position="67"/>
    </location>
</feature>
<feature type="transmembrane region" description="Helical" evidence="1">
    <location>
        <begin position="1"/>
        <end position="21"/>
    </location>
</feature>
<organism>
    <name type="scientific">Ruthia magnifica subsp. Calyptogena magnifica</name>
    <dbReference type="NCBI Taxonomy" id="413404"/>
    <lineage>
        <taxon>Bacteria</taxon>
        <taxon>Pseudomonadati</taxon>
        <taxon>Pseudomonadota</taxon>
        <taxon>Gammaproteobacteria</taxon>
        <taxon>Candidatus Pseudothioglobaceae</taxon>
        <taxon>Candidatus Ruthturnera</taxon>
    </lineage>
</organism>
<protein>
    <recommendedName>
        <fullName evidence="1">Sec-independent protein translocase protein TatA</fullName>
    </recommendedName>
</protein>